<name>LSPA_GEOKA</name>
<sequence length="154" mass="17468">MAYYWIAAAVVILDQWTKWLVVRYMQLGESIPIIDNVLYITSHRNRGAAWGMLEGQFWLFYLITVIVVAAIVIYIRRLKPSERLAGVGLGLMLGGAIGNFLDRVFRKEVVDFIHAYIGTYSFPVFNVADSALTVGVILLFVHMFFFATPEKGNE</sequence>
<reference key="1">
    <citation type="journal article" date="2004" name="Nucleic Acids Res.">
        <title>Thermoadaptation trait revealed by the genome sequence of thermophilic Geobacillus kaustophilus.</title>
        <authorList>
            <person name="Takami H."/>
            <person name="Takaki Y."/>
            <person name="Chee G.-J."/>
            <person name="Nishi S."/>
            <person name="Shimamura S."/>
            <person name="Suzuki H."/>
            <person name="Matsui S."/>
            <person name="Uchiyama I."/>
        </authorList>
    </citation>
    <scope>NUCLEOTIDE SEQUENCE [LARGE SCALE GENOMIC DNA]</scope>
    <source>
        <strain>HTA426</strain>
    </source>
</reference>
<proteinExistence type="inferred from homology"/>
<comment type="function">
    <text evidence="1">This protein specifically catalyzes the removal of signal peptides from prolipoproteins.</text>
</comment>
<comment type="catalytic activity">
    <reaction evidence="1">
        <text>Release of signal peptides from bacterial membrane prolipoproteins. Hydrolyzes -Xaa-Yaa-Zaa-|-(S,diacylglyceryl)Cys-, in which Xaa is hydrophobic (preferably Leu), and Yaa (Ala or Ser) and Zaa (Gly or Ala) have small, neutral side chains.</text>
        <dbReference type="EC" id="3.4.23.36"/>
    </reaction>
</comment>
<comment type="pathway">
    <text evidence="1">Protein modification; lipoprotein biosynthesis (signal peptide cleavage).</text>
</comment>
<comment type="subcellular location">
    <subcellularLocation>
        <location evidence="1">Cell membrane</location>
        <topology evidence="1">Multi-pass membrane protein</topology>
    </subcellularLocation>
</comment>
<comment type="similarity">
    <text evidence="1">Belongs to the peptidase A8 family.</text>
</comment>
<evidence type="ECO:0000255" key="1">
    <source>
        <dbReference type="HAMAP-Rule" id="MF_00161"/>
    </source>
</evidence>
<feature type="chain" id="PRO_0000289385" description="Lipoprotein signal peptidase">
    <location>
        <begin position="1"/>
        <end position="154"/>
    </location>
</feature>
<feature type="transmembrane region" description="Helical" evidence="1">
    <location>
        <begin position="55"/>
        <end position="75"/>
    </location>
</feature>
<feature type="transmembrane region" description="Helical" evidence="1">
    <location>
        <begin position="85"/>
        <end position="105"/>
    </location>
</feature>
<feature type="transmembrane region" description="Helical" evidence="1">
    <location>
        <begin position="127"/>
        <end position="147"/>
    </location>
</feature>
<feature type="active site" evidence="1">
    <location>
        <position position="111"/>
    </location>
</feature>
<feature type="active site" evidence="1">
    <location>
        <position position="129"/>
    </location>
</feature>
<protein>
    <recommendedName>
        <fullName evidence="1">Lipoprotein signal peptidase</fullName>
        <ecNumber evidence="1">3.4.23.36</ecNumber>
    </recommendedName>
    <alternativeName>
        <fullName evidence="1">Prolipoprotein signal peptidase</fullName>
    </alternativeName>
    <alternativeName>
        <fullName evidence="1">Signal peptidase II</fullName>
        <shortName evidence="1">SPase II</shortName>
    </alternativeName>
</protein>
<keyword id="KW-0064">Aspartyl protease</keyword>
<keyword id="KW-1003">Cell membrane</keyword>
<keyword id="KW-0378">Hydrolase</keyword>
<keyword id="KW-0472">Membrane</keyword>
<keyword id="KW-0645">Protease</keyword>
<keyword id="KW-1185">Reference proteome</keyword>
<keyword id="KW-0812">Transmembrane</keyword>
<keyword id="KW-1133">Transmembrane helix</keyword>
<dbReference type="EC" id="3.4.23.36" evidence="1"/>
<dbReference type="EMBL" id="BA000043">
    <property type="protein sequence ID" value="BAD75430.1"/>
    <property type="molecule type" value="Genomic_DNA"/>
</dbReference>
<dbReference type="SMR" id="Q5L0V0"/>
<dbReference type="STRING" id="235909.GK1145"/>
<dbReference type="KEGG" id="gka:GK1145"/>
<dbReference type="PATRIC" id="fig|235909.7.peg.1246"/>
<dbReference type="eggNOG" id="COG0597">
    <property type="taxonomic scope" value="Bacteria"/>
</dbReference>
<dbReference type="HOGENOM" id="CLU_083252_3_0_9"/>
<dbReference type="UniPathway" id="UPA00665"/>
<dbReference type="Proteomes" id="UP000001172">
    <property type="component" value="Chromosome"/>
</dbReference>
<dbReference type="GO" id="GO:0005886">
    <property type="term" value="C:plasma membrane"/>
    <property type="evidence" value="ECO:0007669"/>
    <property type="project" value="UniProtKB-SubCell"/>
</dbReference>
<dbReference type="GO" id="GO:0004190">
    <property type="term" value="F:aspartic-type endopeptidase activity"/>
    <property type="evidence" value="ECO:0007669"/>
    <property type="project" value="UniProtKB-UniRule"/>
</dbReference>
<dbReference type="GO" id="GO:0006508">
    <property type="term" value="P:proteolysis"/>
    <property type="evidence" value="ECO:0007669"/>
    <property type="project" value="UniProtKB-KW"/>
</dbReference>
<dbReference type="HAMAP" id="MF_00161">
    <property type="entry name" value="LspA"/>
    <property type="match status" value="1"/>
</dbReference>
<dbReference type="InterPro" id="IPR001872">
    <property type="entry name" value="Peptidase_A8"/>
</dbReference>
<dbReference type="NCBIfam" id="TIGR00077">
    <property type="entry name" value="lspA"/>
    <property type="match status" value="1"/>
</dbReference>
<dbReference type="PANTHER" id="PTHR33695">
    <property type="entry name" value="LIPOPROTEIN SIGNAL PEPTIDASE"/>
    <property type="match status" value="1"/>
</dbReference>
<dbReference type="PANTHER" id="PTHR33695:SF1">
    <property type="entry name" value="LIPOPROTEIN SIGNAL PEPTIDASE"/>
    <property type="match status" value="1"/>
</dbReference>
<dbReference type="Pfam" id="PF01252">
    <property type="entry name" value="Peptidase_A8"/>
    <property type="match status" value="1"/>
</dbReference>
<dbReference type="PRINTS" id="PR00781">
    <property type="entry name" value="LIPOSIGPTASE"/>
</dbReference>
<dbReference type="PROSITE" id="PS00855">
    <property type="entry name" value="SPASE_II"/>
    <property type="match status" value="1"/>
</dbReference>
<gene>
    <name evidence="1" type="primary">lspA</name>
    <name type="ordered locus">GK1145</name>
</gene>
<organism>
    <name type="scientific">Geobacillus kaustophilus (strain HTA426)</name>
    <dbReference type="NCBI Taxonomy" id="235909"/>
    <lineage>
        <taxon>Bacteria</taxon>
        <taxon>Bacillati</taxon>
        <taxon>Bacillota</taxon>
        <taxon>Bacilli</taxon>
        <taxon>Bacillales</taxon>
        <taxon>Anoxybacillaceae</taxon>
        <taxon>Geobacillus</taxon>
        <taxon>Geobacillus thermoleovorans group</taxon>
    </lineage>
</organism>
<accession>Q5L0V0</accession>